<sequence>MKRELLLEKIEEYKSLMPWFVLEYYQSKLSVPYSFTTLYEYLKEYKRFFNWLIDSGISDADDIASIHIKTLENLTKKDMESFVLYLRERPSLNTYSKKQGVSQTTINRTLSALSSLYKYLTEEVEGPDGEPYFYRNVMKKISTKKKKETLAARAENIKQKLFLGDETMKFLDYVENEYEVKLSNRAKSSFYKNKERDLAIIALLLSSGVRLSEAVNLDLKDINLKMMVIDVTRKGGQRDSVNMASFARPYLENYLSIRNKRYKAEKQDVALFLTEYRGVPNRIDASSIEKMVGKYSQDFKIRVTPHKLRHTLATRLYDATKSQVLVSHQLGHASTQVTDLYTHIVNDEQKNALDNL</sequence>
<organism>
    <name type="scientific">Streptococcus thermophilus (strain ATCC BAA-491 / LMD-9)</name>
    <dbReference type="NCBI Taxonomy" id="322159"/>
    <lineage>
        <taxon>Bacteria</taxon>
        <taxon>Bacillati</taxon>
        <taxon>Bacillota</taxon>
        <taxon>Bacilli</taxon>
        <taxon>Lactobacillales</taxon>
        <taxon>Streptococcaceae</taxon>
        <taxon>Streptococcus</taxon>
    </lineage>
</organism>
<proteinExistence type="inferred from homology"/>
<accession>Q03KP9</accession>
<evidence type="ECO:0000255" key="1">
    <source>
        <dbReference type="HAMAP-Rule" id="MF_01816"/>
    </source>
</evidence>
<evidence type="ECO:0000255" key="2">
    <source>
        <dbReference type="PROSITE-ProRule" id="PRU01246"/>
    </source>
</evidence>
<evidence type="ECO:0000255" key="3">
    <source>
        <dbReference type="PROSITE-ProRule" id="PRU01248"/>
    </source>
</evidence>
<gene>
    <name evidence="1" type="primary">xerS</name>
    <name type="ordered locus">STER_1013</name>
</gene>
<keyword id="KW-0131">Cell cycle</keyword>
<keyword id="KW-0132">Cell division</keyword>
<keyword id="KW-0159">Chromosome partition</keyword>
<keyword id="KW-0963">Cytoplasm</keyword>
<keyword id="KW-0229">DNA integration</keyword>
<keyword id="KW-0233">DNA recombination</keyword>
<keyword id="KW-0238">DNA-binding</keyword>
<dbReference type="EMBL" id="CP000419">
    <property type="protein sequence ID" value="ABJ66223.1"/>
    <property type="molecule type" value="Genomic_DNA"/>
</dbReference>
<dbReference type="RefSeq" id="WP_011681135.1">
    <property type="nucleotide sequence ID" value="NC_008532.1"/>
</dbReference>
<dbReference type="SMR" id="Q03KP9"/>
<dbReference type="KEGG" id="ste:STER_1013"/>
<dbReference type="HOGENOM" id="CLU_027562_9_6_9"/>
<dbReference type="GO" id="GO:0005737">
    <property type="term" value="C:cytoplasm"/>
    <property type="evidence" value="ECO:0007669"/>
    <property type="project" value="UniProtKB-SubCell"/>
</dbReference>
<dbReference type="GO" id="GO:0003677">
    <property type="term" value="F:DNA binding"/>
    <property type="evidence" value="ECO:0007669"/>
    <property type="project" value="UniProtKB-KW"/>
</dbReference>
<dbReference type="GO" id="GO:0009037">
    <property type="term" value="F:tyrosine-based site-specific recombinase activity"/>
    <property type="evidence" value="ECO:0007669"/>
    <property type="project" value="UniProtKB-UniRule"/>
</dbReference>
<dbReference type="GO" id="GO:0051301">
    <property type="term" value="P:cell division"/>
    <property type="evidence" value="ECO:0007669"/>
    <property type="project" value="UniProtKB-KW"/>
</dbReference>
<dbReference type="GO" id="GO:0007059">
    <property type="term" value="P:chromosome segregation"/>
    <property type="evidence" value="ECO:0007669"/>
    <property type="project" value="UniProtKB-UniRule"/>
</dbReference>
<dbReference type="GO" id="GO:0006310">
    <property type="term" value="P:DNA recombination"/>
    <property type="evidence" value="ECO:0007669"/>
    <property type="project" value="UniProtKB-UniRule"/>
</dbReference>
<dbReference type="CDD" id="cd00397">
    <property type="entry name" value="DNA_BRE_C"/>
    <property type="match status" value="1"/>
</dbReference>
<dbReference type="Gene3D" id="1.10.150.130">
    <property type="match status" value="1"/>
</dbReference>
<dbReference type="Gene3D" id="1.10.443.10">
    <property type="entry name" value="Intergrase catalytic core"/>
    <property type="match status" value="1"/>
</dbReference>
<dbReference type="HAMAP" id="MF_01816">
    <property type="entry name" value="Recomb_XerS"/>
    <property type="match status" value="1"/>
</dbReference>
<dbReference type="InterPro" id="IPR044068">
    <property type="entry name" value="CB"/>
</dbReference>
<dbReference type="InterPro" id="IPR011010">
    <property type="entry name" value="DNA_brk_join_enz"/>
</dbReference>
<dbReference type="InterPro" id="IPR013762">
    <property type="entry name" value="Integrase-like_cat_sf"/>
</dbReference>
<dbReference type="InterPro" id="IPR002104">
    <property type="entry name" value="Integrase_catalytic"/>
</dbReference>
<dbReference type="InterPro" id="IPR010998">
    <property type="entry name" value="Integrase_recombinase_N"/>
</dbReference>
<dbReference type="InterPro" id="IPR004107">
    <property type="entry name" value="Integrase_SAM-like_N"/>
</dbReference>
<dbReference type="InterPro" id="IPR023670">
    <property type="entry name" value="Recomb_XerS"/>
</dbReference>
<dbReference type="InterPro" id="IPR050090">
    <property type="entry name" value="Tyrosine_recombinase_XerCD"/>
</dbReference>
<dbReference type="NCBIfam" id="NF003462">
    <property type="entry name" value="PRK05084.1"/>
    <property type="match status" value="1"/>
</dbReference>
<dbReference type="PANTHER" id="PTHR30349">
    <property type="entry name" value="PHAGE INTEGRASE-RELATED"/>
    <property type="match status" value="1"/>
</dbReference>
<dbReference type="PANTHER" id="PTHR30349:SF77">
    <property type="entry name" value="TYROSINE RECOMBINASE XERC"/>
    <property type="match status" value="1"/>
</dbReference>
<dbReference type="Pfam" id="PF02899">
    <property type="entry name" value="Phage_int_SAM_1"/>
    <property type="match status" value="1"/>
</dbReference>
<dbReference type="Pfam" id="PF00589">
    <property type="entry name" value="Phage_integrase"/>
    <property type="match status" value="1"/>
</dbReference>
<dbReference type="SUPFAM" id="SSF56349">
    <property type="entry name" value="DNA breaking-rejoining enzymes"/>
    <property type="match status" value="1"/>
</dbReference>
<dbReference type="PROSITE" id="PS51900">
    <property type="entry name" value="CB"/>
    <property type="match status" value="1"/>
</dbReference>
<dbReference type="PROSITE" id="PS51898">
    <property type="entry name" value="TYR_RECOMBINASE"/>
    <property type="match status" value="1"/>
</dbReference>
<comment type="function">
    <text evidence="1">Site-specific tyrosine recombinase, which acts by catalyzing the cutting and rejoining of the recombining DNA molecules. Essential to convert dimers of the bacterial chromosome into monomers to permit their segregation at cell division.</text>
</comment>
<comment type="activity regulation">
    <text evidence="1">FtsK is required for recombination.</text>
</comment>
<comment type="subcellular location">
    <subcellularLocation>
        <location evidence="1">Cytoplasm</location>
    </subcellularLocation>
</comment>
<comment type="similarity">
    <text evidence="1">Belongs to the 'phage' integrase family. XerS subfamily.</text>
</comment>
<name>XERS_STRTD</name>
<protein>
    <recommendedName>
        <fullName evidence="1">Tyrosine recombinase XerS</fullName>
    </recommendedName>
</protein>
<reference key="1">
    <citation type="journal article" date="2006" name="Proc. Natl. Acad. Sci. U.S.A.">
        <title>Comparative genomics of the lactic acid bacteria.</title>
        <authorList>
            <person name="Makarova K.S."/>
            <person name="Slesarev A."/>
            <person name="Wolf Y.I."/>
            <person name="Sorokin A."/>
            <person name="Mirkin B."/>
            <person name="Koonin E.V."/>
            <person name="Pavlov A."/>
            <person name="Pavlova N."/>
            <person name="Karamychev V."/>
            <person name="Polouchine N."/>
            <person name="Shakhova V."/>
            <person name="Grigoriev I."/>
            <person name="Lou Y."/>
            <person name="Rohksar D."/>
            <person name="Lucas S."/>
            <person name="Huang K."/>
            <person name="Goodstein D.M."/>
            <person name="Hawkins T."/>
            <person name="Plengvidhya V."/>
            <person name="Welker D."/>
            <person name="Hughes J."/>
            <person name="Goh Y."/>
            <person name="Benson A."/>
            <person name="Baldwin K."/>
            <person name="Lee J.-H."/>
            <person name="Diaz-Muniz I."/>
            <person name="Dosti B."/>
            <person name="Smeianov V."/>
            <person name="Wechter W."/>
            <person name="Barabote R."/>
            <person name="Lorca G."/>
            <person name="Altermann E."/>
            <person name="Barrangou R."/>
            <person name="Ganesan B."/>
            <person name="Xie Y."/>
            <person name="Rawsthorne H."/>
            <person name="Tamir D."/>
            <person name="Parker C."/>
            <person name="Breidt F."/>
            <person name="Broadbent J.R."/>
            <person name="Hutkins R."/>
            <person name="O'Sullivan D."/>
            <person name="Steele J."/>
            <person name="Unlu G."/>
            <person name="Saier M.H. Jr."/>
            <person name="Klaenhammer T."/>
            <person name="Richardson P."/>
            <person name="Kozyavkin S."/>
            <person name="Weimer B.C."/>
            <person name="Mills D.A."/>
        </authorList>
    </citation>
    <scope>NUCLEOTIDE SEQUENCE [LARGE SCALE GENOMIC DNA]</scope>
    <source>
        <strain>ATCC BAA-491 / LMD-9</strain>
    </source>
</reference>
<feature type="chain" id="PRO_1000070253" description="Tyrosine recombinase XerS">
    <location>
        <begin position="1"/>
        <end position="356"/>
    </location>
</feature>
<feature type="domain" description="Core-binding (CB)" evidence="3">
    <location>
        <begin position="16"/>
        <end position="121"/>
    </location>
</feature>
<feature type="domain" description="Tyr recombinase" evidence="2">
    <location>
        <begin position="169"/>
        <end position="354"/>
    </location>
</feature>
<feature type="active site" evidence="1">
    <location>
        <position position="210"/>
    </location>
</feature>
<feature type="active site" evidence="1">
    <location>
        <position position="234"/>
    </location>
</feature>
<feature type="active site" evidence="1">
    <location>
        <position position="306"/>
    </location>
</feature>
<feature type="active site" evidence="1">
    <location>
        <position position="309"/>
    </location>
</feature>
<feature type="active site" evidence="1">
    <location>
        <position position="332"/>
    </location>
</feature>
<feature type="active site" description="O-(3'-phospho-DNA)-tyrosine intermediate" evidence="1">
    <location>
        <position position="341"/>
    </location>
</feature>